<dbReference type="EMBL" id="M90095">
    <property type="protein sequence ID" value="AAA50001.1"/>
    <property type="molecule type" value="mRNA"/>
</dbReference>
<dbReference type="EMBL" id="X51394">
    <property type="protein sequence ID" value="CAA35759.1"/>
    <property type="status" value="ALT_FRAME"/>
    <property type="molecule type" value="mRNA"/>
</dbReference>
<dbReference type="PIR" id="A37331">
    <property type="entry name" value="A37331"/>
</dbReference>
<dbReference type="PIR" id="S07498">
    <property type="entry name" value="SKXLAG"/>
</dbReference>
<dbReference type="SMR" id="P17437"/>
<dbReference type="AGR" id="Xenbase:XB-GENE-6462252"/>
<dbReference type="Xenbase" id="XB-GENE-6462252">
    <property type="gene designation" value="tff3.7.S"/>
</dbReference>
<dbReference type="Proteomes" id="UP000186698">
    <property type="component" value="Unplaced"/>
</dbReference>
<dbReference type="GO" id="GO:0005615">
    <property type="term" value="C:extracellular space"/>
    <property type="evidence" value="ECO:0000318"/>
    <property type="project" value="GO_Central"/>
</dbReference>
<dbReference type="GO" id="GO:0008083">
    <property type="term" value="F:growth factor activity"/>
    <property type="evidence" value="ECO:0007669"/>
    <property type="project" value="UniProtKB-KW"/>
</dbReference>
<dbReference type="GO" id="GO:0030277">
    <property type="term" value="P:maintenance of gastrointestinal epithelium"/>
    <property type="evidence" value="ECO:0000318"/>
    <property type="project" value="GO_Central"/>
</dbReference>
<dbReference type="CDD" id="cd00111">
    <property type="entry name" value="Trefoil"/>
    <property type="match status" value="2"/>
</dbReference>
<dbReference type="FunFam" id="4.10.110.10:FF:000006">
    <property type="entry name" value="Trefoil factor 1"/>
    <property type="match status" value="2"/>
</dbReference>
<dbReference type="Gene3D" id="4.10.110.10">
    <property type="entry name" value="Spasmolytic Protein, domain 1"/>
    <property type="match status" value="2"/>
</dbReference>
<dbReference type="InterPro" id="IPR017994">
    <property type="entry name" value="P_trefoil_chordata"/>
</dbReference>
<dbReference type="InterPro" id="IPR017957">
    <property type="entry name" value="P_trefoil_CS"/>
</dbReference>
<dbReference type="InterPro" id="IPR000519">
    <property type="entry name" value="P_trefoil_dom"/>
</dbReference>
<dbReference type="InterPro" id="IPR044913">
    <property type="entry name" value="P_trefoil_dom_sf"/>
</dbReference>
<dbReference type="PANTHER" id="PTHR13826">
    <property type="entry name" value="INTESTINAL TREFOIL FACTOR-RELATED"/>
    <property type="match status" value="1"/>
</dbReference>
<dbReference type="PANTHER" id="PTHR13826:SF20">
    <property type="entry name" value="SKIN SECRETORY PROTEIN XP2"/>
    <property type="match status" value="1"/>
</dbReference>
<dbReference type="Pfam" id="PF00088">
    <property type="entry name" value="Trefoil"/>
    <property type="match status" value="2"/>
</dbReference>
<dbReference type="PRINTS" id="PR00680">
    <property type="entry name" value="PTREFOIL"/>
</dbReference>
<dbReference type="SMART" id="SM00018">
    <property type="entry name" value="PD"/>
    <property type="match status" value="2"/>
</dbReference>
<dbReference type="SUPFAM" id="SSF57492">
    <property type="entry name" value="Trefoil"/>
    <property type="match status" value="2"/>
</dbReference>
<dbReference type="PROSITE" id="PS00025">
    <property type="entry name" value="P_TREFOIL_1"/>
    <property type="match status" value="2"/>
</dbReference>
<dbReference type="PROSITE" id="PS51448">
    <property type="entry name" value="P_TREFOIL_2"/>
    <property type="match status" value="2"/>
</dbReference>
<accession>P17437</accession>
<accession>Q08944</accession>
<gene>
    <name type="primary">p2</name>
</gene>
<reference key="1">
    <citation type="journal article" date="1992" name="J. Biol. Chem.">
        <title>xP2, a new member of the P-domain peptide family of potential growth factors, is synthesized in Xenopus laevis skin.</title>
        <authorList>
            <person name="Hauser F."/>
            <person name="Roeben C."/>
            <person name="Hoffmann W."/>
        </authorList>
    </citation>
    <scope>NUCLEOTIDE SEQUENCE [MRNA] OF 1-25 AND 344-439 (ISOFORM 2)</scope>
</reference>
<reference key="2">
    <citation type="journal article" date="1990" name="FEBS Lett.">
        <title>Dermal glands of Xenopus laevis contain a polypeptide with a highly repetitive amino acid sequence.</title>
        <authorList>
            <person name="Gmachl M."/>
            <person name="Berger H."/>
            <person name="Thalhammer J."/>
            <person name="Kreil G."/>
        </authorList>
    </citation>
    <scope>NUCLEOTIDE SEQUENCE [MRNA] OF 3-439 (ISOFORM 1)</scope>
    <source>
        <tissue>Skin</tissue>
    </source>
</reference>
<feature type="signal peptide" evidence="1">
    <location>
        <begin position="1"/>
        <end position="22"/>
    </location>
</feature>
<feature type="chain" id="PRO_0000023470" description="Skin secretory protein xP2">
    <location>
        <begin position="23"/>
        <end position="439"/>
    </location>
</feature>
<feature type="repeat" description="1">
    <location>
        <begin position="26"/>
        <end position="33"/>
    </location>
</feature>
<feature type="repeat" description="2">
    <location>
        <begin position="34"/>
        <end position="41"/>
    </location>
</feature>
<feature type="repeat" description="3">
    <location>
        <begin position="42"/>
        <end position="51"/>
    </location>
</feature>
<feature type="repeat" description="4">
    <location>
        <begin position="52"/>
        <end position="59"/>
    </location>
</feature>
<feature type="repeat" description="5">
    <location>
        <begin position="60"/>
        <end position="69"/>
    </location>
</feature>
<feature type="repeat" description="6; approximate">
    <location>
        <begin position="70"/>
        <end position="77"/>
    </location>
</feature>
<feature type="repeat" description="7">
    <location>
        <begin position="78"/>
        <end position="87"/>
    </location>
</feature>
<feature type="repeat" description="8">
    <location>
        <begin position="88"/>
        <end position="97"/>
    </location>
</feature>
<feature type="repeat" description="9">
    <location>
        <begin position="98"/>
        <end position="107"/>
    </location>
</feature>
<feature type="repeat" description="10">
    <location>
        <begin position="108"/>
        <end position="115"/>
    </location>
</feature>
<feature type="repeat" description="11">
    <location>
        <begin position="116"/>
        <end position="125"/>
    </location>
</feature>
<feature type="repeat" description="12">
    <location>
        <begin position="126"/>
        <end position="135"/>
    </location>
</feature>
<feature type="repeat" description="13">
    <location>
        <begin position="136"/>
        <end position="145"/>
    </location>
</feature>
<feature type="repeat" description="14">
    <location>
        <begin position="146"/>
        <end position="153"/>
    </location>
</feature>
<feature type="repeat" description="15">
    <location>
        <begin position="154"/>
        <end position="163"/>
    </location>
</feature>
<feature type="repeat" description="16; approximate">
    <location>
        <begin position="164"/>
        <end position="173"/>
    </location>
</feature>
<feature type="repeat" description="17">
    <location>
        <begin position="174"/>
        <end position="183"/>
    </location>
</feature>
<feature type="repeat" description="18">
    <location>
        <begin position="184"/>
        <end position="193"/>
    </location>
</feature>
<feature type="repeat" description="19">
    <location>
        <begin position="194"/>
        <end position="203"/>
    </location>
</feature>
<feature type="repeat" description="20">
    <location>
        <begin position="204"/>
        <end position="215"/>
    </location>
</feature>
<feature type="repeat" description="21">
    <location>
        <begin position="216"/>
        <end position="225"/>
    </location>
</feature>
<feature type="repeat" description="22">
    <location>
        <begin position="226"/>
        <end position="235"/>
    </location>
</feature>
<feature type="repeat" description="23">
    <location>
        <begin position="236"/>
        <end position="245"/>
    </location>
</feature>
<feature type="repeat" description="24">
    <location>
        <begin position="246"/>
        <end position="255"/>
    </location>
</feature>
<feature type="repeat" description="25">
    <location>
        <begin position="256"/>
        <end position="265"/>
    </location>
</feature>
<feature type="repeat" description="26">
    <location>
        <begin position="266"/>
        <end position="275"/>
    </location>
</feature>
<feature type="repeat" description="27">
    <location>
        <begin position="276"/>
        <end position="285"/>
    </location>
</feature>
<feature type="repeat" description="28">
    <location>
        <begin position="286"/>
        <end position="293"/>
    </location>
</feature>
<feature type="repeat" description="29">
    <location>
        <begin position="294"/>
        <end position="303"/>
    </location>
</feature>
<feature type="repeat" description="30">
    <location>
        <begin position="304"/>
        <end position="313"/>
    </location>
</feature>
<feature type="repeat" description="31; approximate">
    <location>
        <begin position="314"/>
        <end position="321"/>
    </location>
</feature>
<feature type="repeat" description="32; approximate">
    <location>
        <begin position="322"/>
        <end position="331"/>
    </location>
</feature>
<feature type="repeat" description="33; approximate">
    <location>
        <begin position="332"/>
        <end position="343"/>
    </location>
</feature>
<feature type="domain" description="P-type 1" evidence="2">
    <location>
        <begin position="349"/>
        <end position="392"/>
    </location>
</feature>
<feature type="domain" description="P-type 2" evidence="2">
    <location>
        <begin position="396"/>
        <end position="439"/>
    </location>
</feature>
<feature type="region of interest" description="Disordered" evidence="3">
    <location>
        <begin position="25"/>
        <end position="351"/>
    </location>
</feature>
<feature type="region of interest" description="33 X approximate repeats of G-G(0,1)-[EV](0,1)-A-P-[A-P](1,3)-A-E">
    <location>
        <begin position="26"/>
        <end position="343"/>
    </location>
</feature>
<feature type="compositionally biased region" description="Low complexity" evidence="3">
    <location>
        <begin position="26"/>
        <end position="345"/>
    </location>
</feature>
<feature type="disulfide bond" evidence="2">
    <location>
        <begin position="351"/>
        <end position="377"/>
    </location>
</feature>
<feature type="disulfide bond" evidence="2">
    <location>
        <begin position="361"/>
        <end position="376"/>
    </location>
</feature>
<feature type="disulfide bond" evidence="2">
    <location>
        <begin position="371"/>
        <end position="388"/>
    </location>
</feature>
<feature type="disulfide bond" evidence="2">
    <location>
        <begin position="398"/>
        <end position="424"/>
    </location>
</feature>
<feature type="disulfide bond" evidence="2">
    <location>
        <begin position="408"/>
        <end position="423"/>
    </location>
</feature>
<feature type="disulfide bond" evidence="2">
    <location>
        <begin position="418"/>
        <end position="435"/>
    </location>
</feature>
<feature type="splice variant" id="VSP_004652" description="In isoform 2." evidence="4">
    <location>
        <begin position="26"/>
        <end position="343"/>
    </location>
</feature>
<feature type="sequence conflict" description="In Ref. 2; CAA35759." evidence="5" ref="2">
    <original>H</original>
    <variation>S</variation>
    <location>
        <position position="3"/>
    </location>
</feature>
<feature type="sequence conflict" description="In Ref. 2; CAA35759." evidence="5" ref="2">
    <original>C</original>
    <variation>W</variation>
    <location>
        <position position="18"/>
    </location>
</feature>
<proteinExistence type="evidence at transcript level"/>
<comment type="function">
    <text>May act as a growth factor in the germinal layer of the epidermis. May also be involved in growth of regenerating glands and in protection of the skin from the external environment.</text>
</comment>
<comment type="subcellular location">
    <subcellularLocation>
        <location>Secreted</location>
    </subcellularLocation>
</comment>
<comment type="alternative products">
    <event type="alternative splicing"/>
    <isoform>
        <id>P17437-1</id>
        <name>1</name>
        <name>APEG</name>
        <sequence type="displayed"/>
    </isoform>
    <isoform>
        <id>P17437-2</id>
        <name>2</name>
        <name>XP2</name>
        <sequence type="described" ref="VSP_004652"/>
    </isoform>
</comment>
<comment type="tissue specificity">
    <text>Skin.</text>
</comment>
<comment type="sequence caution" evidence="5">
    <conflict type="frameshift">
        <sequence resource="EMBL-CDS" id="CAA35759"/>
    </conflict>
</comment>
<protein>
    <recommendedName>
        <fullName>Skin secretory protein xP2</fullName>
    </recommendedName>
    <alternativeName>
        <fullName>Protein APEG</fullName>
    </alternativeName>
</protein>
<name>XP2_XENLA</name>
<keyword id="KW-0025">Alternative splicing</keyword>
<keyword id="KW-1015">Disulfide bond</keyword>
<keyword id="KW-0339">Growth factor</keyword>
<keyword id="KW-1185">Reference proteome</keyword>
<keyword id="KW-0677">Repeat</keyword>
<keyword id="KW-0964">Secreted</keyword>
<keyword id="KW-0732">Signal</keyword>
<sequence length="439" mass="41173">MNHKLFCVHFLLLILSVCYIQGQDAGGEPAPAEGVAPAPAEGGAPAPAPAEGEAPAPAEGGAPAPAPAEGAEPAPADGGAPAPAPAEGGAPAPAPAEGGAPAPAPAEGGAPAPAEGGAPAPAPAEGEAPAPAPAEGEAPAPAPAEGEAPAPAEGEAPAPAPAEVEAPAPAPAEGEAPAPAPAEGEAPAPAPAEGEAPAPAPAEGEAPAPAPAPAEGEAPAPAPAEGEAPAPAPAEGEAPAPAPAEGEAPAPAPAEGEAPAPAPAEGEAPAPAPAEGEAPAPAPAEGEAPAPAEGEAPAPAPAEGEAPAPAPAEGGAPSPAEGGAPAAAPAEGGAPAPAPAPVEVGPKTEDCKGDPFKRTDCGYPGITEGQCKAKGCCFDSSIVGVKWCFFPRTARAQCLFSPGDREDCGYSSITPMECMKRGCCFDASITGVKWCFHQK</sequence>
<evidence type="ECO:0000255" key="1"/>
<evidence type="ECO:0000255" key="2">
    <source>
        <dbReference type="PROSITE-ProRule" id="PRU00779"/>
    </source>
</evidence>
<evidence type="ECO:0000256" key="3">
    <source>
        <dbReference type="SAM" id="MobiDB-lite"/>
    </source>
</evidence>
<evidence type="ECO:0000303" key="4">
    <source>
    </source>
</evidence>
<evidence type="ECO:0000305" key="5"/>
<organism>
    <name type="scientific">Xenopus laevis</name>
    <name type="common">African clawed frog</name>
    <dbReference type="NCBI Taxonomy" id="8355"/>
    <lineage>
        <taxon>Eukaryota</taxon>
        <taxon>Metazoa</taxon>
        <taxon>Chordata</taxon>
        <taxon>Craniata</taxon>
        <taxon>Vertebrata</taxon>
        <taxon>Euteleostomi</taxon>
        <taxon>Amphibia</taxon>
        <taxon>Batrachia</taxon>
        <taxon>Anura</taxon>
        <taxon>Pipoidea</taxon>
        <taxon>Pipidae</taxon>
        <taxon>Xenopodinae</taxon>
        <taxon>Xenopus</taxon>
        <taxon>Xenopus</taxon>
    </lineage>
</organism>